<evidence type="ECO:0000255" key="1">
    <source>
        <dbReference type="HAMAP-Rule" id="MF_01571"/>
    </source>
</evidence>
<sequence>MVENFSEWFHDILEEANITDSRYPIKGMAVWMPYGFQIRKYTTNLIKEVYDRDHEEVLFPLLVPEAELAKEGLHVKGFEDEVYWVTHGGKTQLNEKLALRPTSETSIYPMYSLWIRSHIDLPLKYYQIVNTFRYETKHTRPLIRVREITTFKEAHTAHASKEEADIQVQEHIENYKEIFDTLGIPYTLTKRPEWDKFPGADYTMAFDAIMPDGKTLQIGTIHNLGQTFAKTFDITFEDKDGEHKLVYQTCAGLSDRVIASAIGIHGDEKGLRLPPEISPKQITIIPILFKKGKEEVLAKCEELKKEFEAAGLRVNIDNRDIRPGKKFYDWELKGTPIKLELGPRDLENNKTIAMRRDQLEKIELDLDENLVSNVIRLIDELNENLAESAKEFHTDHIKFASDIDEVRKLIEEGNVVAVNWCGDTDCGEKIEEITGYSVLGIYEELEEAGKKCILSDEDAKYVALIAKTY</sequence>
<dbReference type="EC" id="6.1.1.15" evidence="1"/>
<dbReference type="EMBL" id="CP000678">
    <property type="protein sequence ID" value="ABQ86492.1"/>
    <property type="molecule type" value="Genomic_DNA"/>
</dbReference>
<dbReference type="RefSeq" id="WP_004034774.1">
    <property type="nucleotide sequence ID" value="NZ_CP117965.1"/>
</dbReference>
<dbReference type="SMR" id="A5UJW4"/>
<dbReference type="STRING" id="420247.Msm_0287"/>
<dbReference type="EnsemblBacteria" id="ABQ86492">
    <property type="protein sequence ID" value="ABQ86492"/>
    <property type="gene ID" value="Msm_0287"/>
</dbReference>
<dbReference type="GeneID" id="78816911"/>
<dbReference type="KEGG" id="msi:Msm_0287"/>
<dbReference type="PATRIC" id="fig|420247.28.peg.290"/>
<dbReference type="eggNOG" id="arCOG00402">
    <property type="taxonomic scope" value="Archaea"/>
</dbReference>
<dbReference type="HOGENOM" id="CLU_001882_4_2_2"/>
<dbReference type="Proteomes" id="UP000001992">
    <property type="component" value="Chromosome"/>
</dbReference>
<dbReference type="GO" id="GO:0017101">
    <property type="term" value="C:aminoacyl-tRNA synthetase multienzyme complex"/>
    <property type="evidence" value="ECO:0007669"/>
    <property type="project" value="TreeGrafter"/>
</dbReference>
<dbReference type="GO" id="GO:0005737">
    <property type="term" value="C:cytoplasm"/>
    <property type="evidence" value="ECO:0007669"/>
    <property type="project" value="UniProtKB-SubCell"/>
</dbReference>
<dbReference type="GO" id="GO:0005524">
    <property type="term" value="F:ATP binding"/>
    <property type="evidence" value="ECO:0007669"/>
    <property type="project" value="UniProtKB-UniRule"/>
</dbReference>
<dbReference type="GO" id="GO:0004827">
    <property type="term" value="F:proline-tRNA ligase activity"/>
    <property type="evidence" value="ECO:0007669"/>
    <property type="project" value="UniProtKB-UniRule"/>
</dbReference>
<dbReference type="GO" id="GO:0006433">
    <property type="term" value="P:prolyl-tRNA aminoacylation"/>
    <property type="evidence" value="ECO:0007669"/>
    <property type="project" value="UniProtKB-UniRule"/>
</dbReference>
<dbReference type="CDD" id="cd00862">
    <property type="entry name" value="ProRS_anticodon_zinc"/>
    <property type="match status" value="1"/>
</dbReference>
<dbReference type="CDD" id="cd00778">
    <property type="entry name" value="ProRS_core_arch_euk"/>
    <property type="match status" value="1"/>
</dbReference>
<dbReference type="FunFam" id="3.30.930.10:FF:000037">
    <property type="entry name" value="Proline--tRNA ligase"/>
    <property type="match status" value="1"/>
</dbReference>
<dbReference type="Gene3D" id="3.40.50.800">
    <property type="entry name" value="Anticodon-binding domain"/>
    <property type="match status" value="1"/>
</dbReference>
<dbReference type="Gene3D" id="3.30.930.10">
    <property type="entry name" value="Bira Bifunctional Protein, Domain 2"/>
    <property type="match status" value="1"/>
</dbReference>
<dbReference type="Gene3D" id="3.30.110.30">
    <property type="entry name" value="C-terminal domain of ProRS"/>
    <property type="match status" value="1"/>
</dbReference>
<dbReference type="HAMAP" id="MF_01571">
    <property type="entry name" value="Pro_tRNA_synth_type3"/>
    <property type="match status" value="1"/>
</dbReference>
<dbReference type="InterPro" id="IPR002314">
    <property type="entry name" value="aa-tRNA-synt_IIb"/>
</dbReference>
<dbReference type="InterPro" id="IPR006195">
    <property type="entry name" value="aa-tRNA-synth_II"/>
</dbReference>
<dbReference type="InterPro" id="IPR045864">
    <property type="entry name" value="aa-tRNA-synth_II/BPL/LPL"/>
</dbReference>
<dbReference type="InterPro" id="IPR004154">
    <property type="entry name" value="Anticodon-bd"/>
</dbReference>
<dbReference type="InterPro" id="IPR036621">
    <property type="entry name" value="Anticodon-bd_dom_sf"/>
</dbReference>
<dbReference type="InterPro" id="IPR002316">
    <property type="entry name" value="Pro-tRNA-ligase_IIa"/>
</dbReference>
<dbReference type="InterPro" id="IPR004499">
    <property type="entry name" value="Pro-tRNA-ligase_IIa_arc-type"/>
</dbReference>
<dbReference type="InterPro" id="IPR016061">
    <property type="entry name" value="Pro-tRNA_ligase_II_C"/>
</dbReference>
<dbReference type="InterPro" id="IPR017449">
    <property type="entry name" value="Pro-tRNA_synth_II"/>
</dbReference>
<dbReference type="InterPro" id="IPR033721">
    <property type="entry name" value="ProRS_core_arch_euk"/>
</dbReference>
<dbReference type="NCBIfam" id="TIGR00408">
    <property type="entry name" value="proS_fam_I"/>
    <property type="match status" value="1"/>
</dbReference>
<dbReference type="PANTHER" id="PTHR43382:SF2">
    <property type="entry name" value="BIFUNCTIONAL GLUTAMATE_PROLINE--TRNA LIGASE"/>
    <property type="match status" value="1"/>
</dbReference>
<dbReference type="PANTHER" id="PTHR43382">
    <property type="entry name" value="PROLYL-TRNA SYNTHETASE"/>
    <property type="match status" value="1"/>
</dbReference>
<dbReference type="Pfam" id="PF03129">
    <property type="entry name" value="HGTP_anticodon"/>
    <property type="match status" value="1"/>
</dbReference>
<dbReference type="Pfam" id="PF09180">
    <property type="entry name" value="ProRS-C_1"/>
    <property type="match status" value="1"/>
</dbReference>
<dbReference type="Pfam" id="PF00587">
    <property type="entry name" value="tRNA-synt_2b"/>
    <property type="match status" value="1"/>
</dbReference>
<dbReference type="PRINTS" id="PR01046">
    <property type="entry name" value="TRNASYNTHPRO"/>
</dbReference>
<dbReference type="SMART" id="SM00946">
    <property type="entry name" value="ProRS-C_1"/>
    <property type="match status" value="1"/>
</dbReference>
<dbReference type="SUPFAM" id="SSF64586">
    <property type="entry name" value="C-terminal domain of ProRS"/>
    <property type="match status" value="1"/>
</dbReference>
<dbReference type="SUPFAM" id="SSF52954">
    <property type="entry name" value="Class II aaRS ABD-related"/>
    <property type="match status" value="1"/>
</dbReference>
<dbReference type="SUPFAM" id="SSF55681">
    <property type="entry name" value="Class II aaRS and biotin synthetases"/>
    <property type="match status" value="1"/>
</dbReference>
<dbReference type="PROSITE" id="PS50862">
    <property type="entry name" value="AA_TRNA_LIGASE_II"/>
    <property type="match status" value="1"/>
</dbReference>
<organism>
    <name type="scientific">Methanobrevibacter smithii (strain ATCC 35061 / DSM 861 / OCM 144 / PS)</name>
    <dbReference type="NCBI Taxonomy" id="420247"/>
    <lineage>
        <taxon>Archaea</taxon>
        <taxon>Methanobacteriati</taxon>
        <taxon>Methanobacteriota</taxon>
        <taxon>Methanomada group</taxon>
        <taxon>Methanobacteria</taxon>
        <taxon>Methanobacteriales</taxon>
        <taxon>Methanobacteriaceae</taxon>
        <taxon>Methanobrevibacter</taxon>
    </lineage>
</organism>
<comment type="function">
    <text evidence="1">Catalyzes the attachment of proline to tRNA(Pro) in a two-step reaction: proline is first activated by ATP to form Pro-AMP and then transferred to the acceptor end of tRNA(Pro).</text>
</comment>
<comment type="catalytic activity">
    <reaction evidence="1">
        <text>tRNA(Pro) + L-proline + ATP = L-prolyl-tRNA(Pro) + AMP + diphosphate</text>
        <dbReference type="Rhea" id="RHEA:14305"/>
        <dbReference type="Rhea" id="RHEA-COMP:9700"/>
        <dbReference type="Rhea" id="RHEA-COMP:9702"/>
        <dbReference type="ChEBI" id="CHEBI:30616"/>
        <dbReference type="ChEBI" id="CHEBI:33019"/>
        <dbReference type="ChEBI" id="CHEBI:60039"/>
        <dbReference type="ChEBI" id="CHEBI:78442"/>
        <dbReference type="ChEBI" id="CHEBI:78532"/>
        <dbReference type="ChEBI" id="CHEBI:456215"/>
        <dbReference type="EC" id="6.1.1.15"/>
    </reaction>
</comment>
<comment type="subunit">
    <text evidence="1">Homodimer.</text>
</comment>
<comment type="subcellular location">
    <subcellularLocation>
        <location evidence="1">Cytoplasm</location>
    </subcellularLocation>
</comment>
<comment type="domain">
    <text evidence="1">Consists of three domains: the N-terminal catalytic domain, the anticodon-binding domain and the C-terminal extension.</text>
</comment>
<comment type="similarity">
    <text evidence="1">Belongs to the class-II aminoacyl-tRNA synthetase family. ProS type 3 subfamily.</text>
</comment>
<protein>
    <recommendedName>
        <fullName evidence="1">Proline--tRNA ligase</fullName>
        <ecNumber evidence="1">6.1.1.15</ecNumber>
    </recommendedName>
    <alternativeName>
        <fullName evidence="1">Prolyl-tRNA synthetase</fullName>
        <shortName evidence="1">ProRS</shortName>
    </alternativeName>
</protein>
<reference key="1">
    <citation type="journal article" date="2007" name="Proc. Natl. Acad. Sci. U.S.A.">
        <title>Genomic and metabolic adaptations of Methanobrevibacter smithii to the human gut.</title>
        <authorList>
            <person name="Samuel B.S."/>
            <person name="Hansen E.E."/>
            <person name="Manchester J.K."/>
            <person name="Coutinho P.M."/>
            <person name="Henrissat B."/>
            <person name="Fulton R."/>
            <person name="Latreille P."/>
            <person name="Kim K."/>
            <person name="Wilson R.K."/>
            <person name="Gordon J.I."/>
        </authorList>
    </citation>
    <scope>NUCLEOTIDE SEQUENCE [LARGE SCALE GENOMIC DNA]</scope>
    <source>
        <strain>ATCC 35061 / DSM 861 / OCM 144 / PS</strain>
    </source>
</reference>
<keyword id="KW-0030">Aminoacyl-tRNA synthetase</keyword>
<keyword id="KW-0067">ATP-binding</keyword>
<keyword id="KW-0963">Cytoplasm</keyword>
<keyword id="KW-0436">Ligase</keyword>
<keyword id="KW-0547">Nucleotide-binding</keyword>
<keyword id="KW-0648">Protein biosynthesis</keyword>
<accession>A5UJW4</accession>
<name>SYP_METS3</name>
<proteinExistence type="inferred from homology"/>
<feature type="chain" id="PRO_0000318774" description="Proline--tRNA ligase">
    <location>
        <begin position="1"/>
        <end position="469"/>
    </location>
</feature>
<gene>
    <name evidence="1" type="primary">proS</name>
    <name type="ordered locus">Msm_0287</name>
</gene>